<organism>
    <name type="scientific">Cupriavidus necator (strain ATCC 17699 / DSM 428 / KCTC 22496 / NCIMB 10442 / H16 / Stanier 337)</name>
    <name type="common">Ralstonia eutropha</name>
    <dbReference type="NCBI Taxonomy" id="381666"/>
    <lineage>
        <taxon>Bacteria</taxon>
        <taxon>Pseudomonadati</taxon>
        <taxon>Pseudomonadota</taxon>
        <taxon>Betaproteobacteria</taxon>
        <taxon>Burkholderiales</taxon>
        <taxon>Burkholderiaceae</taxon>
        <taxon>Cupriavidus</taxon>
    </lineage>
</organism>
<name>RL30_CUPNH</name>
<keyword id="KW-1185">Reference proteome</keyword>
<keyword id="KW-0687">Ribonucleoprotein</keyword>
<keyword id="KW-0689">Ribosomal protein</keyword>
<sequence length="60" mass="6690">MSQKTVKVQLVRSLIGTREDHRATVRGLGLRRINSVSELQDTPAVRGMINKVSYLVKVLA</sequence>
<dbReference type="EMBL" id="AM260479">
    <property type="protein sequence ID" value="CAJ94534.1"/>
    <property type="molecule type" value="Genomic_DNA"/>
</dbReference>
<dbReference type="RefSeq" id="WP_010812381.1">
    <property type="nucleotide sequence ID" value="NZ_CP039287.1"/>
</dbReference>
<dbReference type="SMR" id="Q0K637"/>
<dbReference type="STRING" id="381666.H16_A3466"/>
<dbReference type="GeneID" id="98344084"/>
<dbReference type="KEGG" id="reh:H16_A3466"/>
<dbReference type="eggNOG" id="COG1841">
    <property type="taxonomic scope" value="Bacteria"/>
</dbReference>
<dbReference type="HOGENOM" id="CLU_131047_1_4_4"/>
<dbReference type="OrthoDB" id="9812790at2"/>
<dbReference type="Proteomes" id="UP000008210">
    <property type="component" value="Chromosome 1"/>
</dbReference>
<dbReference type="GO" id="GO:0022625">
    <property type="term" value="C:cytosolic large ribosomal subunit"/>
    <property type="evidence" value="ECO:0007669"/>
    <property type="project" value="TreeGrafter"/>
</dbReference>
<dbReference type="GO" id="GO:0003735">
    <property type="term" value="F:structural constituent of ribosome"/>
    <property type="evidence" value="ECO:0007669"/>
    <property type="project" value="InterPro"/>
</dbReference>
<dbReference type="GO" id="GO:0006412">
    <property type="term" value="P:translation"/>
    <property type="evidence" value="ECO:0007669"/>
    <property type="project" value="UniProtKB-UniRule"/>
</dbReference>
<dbReference type="CDD" id="cd01658">
    <property type="entry name" value="Ribosomal_L30"/>
    <property type="match status" value="1"/>
</dbReference>
<dbReference type="FunFam" id="3.30.1390.20:FF:000001">
    <property type="entry name" value="50S ribosomal protein L30"/>
    <property type="match status" value="1"/>
</dbReference>
<dbReference type="Gene3D" id="3.30.1390.20">
    <property type="entry name" value="Ribosomal protein L30, ferredoxin-like fold domain"/>
    <property type="match status" value="1"/>
</dbReference>
<dbReference type="HAMAP" id="MF_01371_B">
    <property type="entry name" value="Ribosomal_uL30_B"/>
    <property type="match status" value="1"/>
</dbReference>
<dbReference type="InterPro" id="IPR036919">
    <property type="entry name" value="Ribo_uL30_ferredoxin-like_sf"/>
</dbReference>
<dbReference type="InterPro" id="IPR005996">
    <property type="entry name" value="Ribosomal_uL30_bac-type"/>
</dbReference>
<dbReference type="InterPro" id="IPR016082">
    <property type="entry name" value="Ribosomal_uL30_ferredoxin-like"/>
</dbReference>
<dbReference type="NCBIfam" id="TIGR01308">
    <property type="entry name" value="rpmD_bact"/>
    <property type="match status" value="1"/>
</dbReference>
<dbReference type="PANTHER" id="PTHR15892:SF2">
    <property type="entry name" value="LARGE RIBOSOMAL SUBUNIT PROTEIN UL30M"/>
    <property type="match status" value="1"/>
</dbReference>
<dbReference type="PANTHER" id="PTHR15892">
    <property type="entry name" value="MITOCHONDRIAL RIBOSOMAL PROTEIN L30"/>
    <property type="match status" value="1"/>
</dbReference>
<dbReference type="Pfam" id="PF00327">
    <property type="entry name" value="Ribosomal_L30"/>
    <property type="match status" value="1"/>
</dbReference>
<dbReference type="PIRSF" id="PIRSF002211">
    <property type="entry name" value="Ribosomal_L30_bac-type"/>
    <property type="match status" value="1"/>
</dbReference>
<dbReference type="SUPFAM" id="SSF55129">
    <property type="entry name" value="Ribosomal protein L30p/L7e"/>
    <property type="match status" value="1"/>
</dbReference>
<proteinExistence type="inferred from homology"/>
<accession>Q0K637</accession>
<protein>
    <recommendedName>
        <fullName evidence="1">Large ribosomal subunit protein uL30</fullName>
    </recommendedName>
    <alternativeName>
        <fullName evidence="2">50S ribosomal protein L30</fullName>
    </alternativeName>
</protein>
<comment type="subunit">
    <text evidence="1">Part of the 50S ribosomal subunit.</text>
</comment>
<comment type="similarity">
    <text evidence="1">Belongs to the universal ribosomal protein uL30 family.</text>
</comment>
<gene>
    <name evidence="1" type="primary">rpmD</name>
    <name type="ordered locus">H16_A3466</name>
</gene>
<evidence type="ECO:0000255" key="1">
    <source>
        <dbReference type="HAMAP-Rule" id="MF_01371"/>
    </source>
</evidence>
<evidence type="ECO:0000305" key="2"/>
<feature type="chain" id="PRO_0000273835" description="Large ribosomal subunit protein uL30">
    <location>
        <begin position="1"/>
        <end position="60"/>
    </location>
</feature>
<reference key="1">
    <citation type="journal article" date="2006" name="Nat. Biotechnol.">
        <title>Genome sequence of the bioplastic-producing 'Knallgas' bacterium Ralstonia eutropha H16.</title>
        <authorList>
            <person name="Pohlmann A."/>
            <person name="Fricke W.F."/>
            <person name="Reinecke F."/>
            <person name="Kusian B."/>
            <person name="Liesegang H."/>
            <person name="Cramm R."/>
            <person name="Eitinger T."/>
            <person name="Ewering C."/>
            <person name="Poetter M."/>
            <person name="Schwartz E."/>
            <person name="Strittmatter A."/>
            <person name="Voss I."/>
            <person name="Gottschalk G."/>
            <person name="Steinbuechel A."/>
            <person name="Friedrich B."/>
            <person name="Bowien B."/>
        </authorList>
    </citation>
    <scope>NUCLEOTIDE SEQUENCE [LARGE SCALE GENOMIC DNA]</scope>
    <source>
        <strain>ATCC 17699 / DSM 428 / KCTC 22496 / NCIMB 10442 / H16 / Stanier 337</strain>
    </source>
</reference>